<name>GLMM_STAAC</name>
<gene>
    <name type="primary">glmM</name>
    <name type="synonym">femD</name>
    <name type="ordered locus">SACOL2151</name>
</gene>
<keyword id="KW-0413">Isomerase</keyword>
<keyword id="KW-0460">Magnesium</keyword>
<keyword id="KW-0479">Metal-binding</keyword>
<keyword id="KW-0597">Phosphoprotein</keyword>
<comment type="function">
    <text evidence="4">Catalyzes the conversion of glucosamine-6-phosphate to glucosamine-1-phosphate.</text>
</comment>
<comment type="catalytic activity">
    <reaction evidence="4">
        <text>alpha-D-glucosamine 1-phosphate = D-glucosamine 6-phosphate</text>
        <dbReference type="Rhea" id="RHEA:23424"/>
        <dbReference type="ChEBI" id="CHEBI:58516"/>
        <dbReference type="ChEBI" id="CHEBI:58725"/>
        <dbReference type="EC" id="5.4.2.10"/>
    </reaction>
</comment>
<comment type="cofactor">
    <cofactor evidence="1">
        <name>Mg(2+)</name>
        <dbReference type="ChEBI" id="CHEBI:18420"/>
    </cofactor>
    <text evidence="1">Binds 1 Mg(2+) ion per subunit.</text>
</comment>
<comment type="PTM">
    <text evidence="2">Activated by phosphorylation. Can autophosphorylate in vitro using ATP.</text>
</comment>
<comment type="disruption phenotype">
    <text evidence="3">Disruption results in a drastically reduced methicillin resistance.</text>
</comment>
<comment type="similarity">
    <text evidence="5">Belongs to the phosphohexose mutase family.</text>
</comment>
<evidence type="ECO:0000250" key="1"/>
<evidence type="ECO:0000269" key="2">
    <source>
    </source>
</evidence>
<evidence type="ECO:0000269" key="3">
    <source>
    </source>
</evidence>
<evidence type="ECO:0000269" key="4">
    <source>
    </source>
</evidence>
<evidence type="ECO:0000305" key="5"/>
<evidence type="ECO:0000305" key="6">
    <source>
    </source>
</evidence>
<organism>
    <name type="scientific">Staphylococcus aureus (strain COL)</name>
    <dbReference type="NCBI Taxonomy" id="93062"/>
    <lineage>
        <taxon>Bacteria</taxon>
        <taxon>Bacillati</taxon>
        <taxon>Bacillota</taxon>
        <taxon>Bacilli</taxon>
        <taxon>Bacillales</taxon>
        <taxon>Staphylococcaceae</taxon>
        <taxon>Staphylococcus</taxon>
    </lineage>
</organism>
<dbReference type="EC" id="5.4.2.10"/>
<dbReference type="EMBL" id="Y09927">
    <property type="protein sequence ID" value="CAA71060.2"/>
    <property type="molecule type" value="Genomic_DNA"/>
</dbReference>
<dbReference type="EMBL" id="CP000046">
    <property type="protein sequence ID" value="AAW38459.1"/>
    <property type="molecule type" value="Genomic_DNA"/>
</dbReference>
<dbReference type="RefSeq" id="WP_000521491.1">
    <property type="nucleotide sequence ID" value="NZ_JBGOFO010000007.1"/>
</dbReference>
<dbReference type="SMR" id="Q5HE43"/>
<dbReference type="iPTMnet" id="Q5HE43"/>
<dbReference type="KEGG" id="sac:SACOL2151"/>
<dbReference type="HOGENOM" id="CLU_016950_7_0_9"/>
<dbReference type="Proteomes" id="UP000000530">
    <property type="component" value="Chromosome"/>
</dbReference>
<dbReference type="GO" id="GO:0005829">
    <property type="term" value="C:cytosol"/>
    <property type="evidence" value="ECO:0007669"/>
    <property type="project" value="TreeGrafter"/>
</dbReference>
<dbReference type="GO" id="GO:0000287">
    <property type="term" value="F:magnesium ion binding"/>
    <property type="evidence" value="ECO:0007669"/>
    <property type="project" value="UniProtKB-UniRule"/>
</dbReference>
<dbReference type="GO" id="GO:0008966">
    <property type="term" value="F:phosphoglucosamine mutase activity"/>
    <property type="evidence" value="ECO:0007669"/>
    <property type="project" value="UniProtKB-UniRule"/>
</dbReference>
<dbReference type="GO" id="GO:0004615">
    <property type="term" value="F:phosphomannomutase activity"/>
    <property type="evidence" value="ECO:0007669"/>
    <property type="project" value="TreeGrafter"/>
</dbReference>
<dbReference type="GO" id="GO:0005975">
    <property type="term" value="P:carbohydrate metabolic process"/>
    <property type="evidence" value="ECO:0007669"/>
    <property type="project" value="InterPro"/>
</dbReference>
<dbReference type="GO" id="GO:0009252">
    <property type="term" value="P:peptidoglycan biosynthetic process"/>
    <property type="evidence" value="ECO:0007669"/>
    <property type="project" value="TreeGrafter"/>
</dbReference>
<dbReference type="GO" id="GO:0006048">
    <property type="term" value="P:UDP-N-acetylglucosamine biosynthetic process"/>
    <property type="evidence" value="ECO:0007669"/>
    <property type="project" value="TreeGrafter"/>
</dbReference>
<dbReference type="CDD" id="cd05802">
    <property type="entry name" value="GlmM"/>
    <property type="match status" value="1"/>
</dbReference>
<dbReference type="FunFam" id="3.30.310.50:FF:000001">
    <property type="entry name" value="Phosphoglucosamine mutase"/>
    <property type="match status" value="1"/>
</dbReference>
<dbReference type="FunFam" id="3.40.120.10:FF:000001">
    <property type="entry name" value="Phosphoglucosamine mutase"/>
    <property type="match status" value="1"/>
</dbReference>
<dbReference type="FunFam" id="3.40.120.10:FF:000002">
    <property type="entry name" value="Phosphoglucosamine mutase"/>
    <property type="match status" value="1"/>
</dbReference>
<dbReference type="Gene3D" id="3.40.120.10">
    <property type="entry name" value="Alpha-D-Glucose-1,6-Bisphosphate, subunit A, domain 3"/>
    <property type="match status" value="3"/>
</dbReference>
<dbReference type="Gene3D" id="3.30.310.50">
    <property type="entry name" value="Alpha-D-phosphohexomutase, C-terminal domain"/>
    <property type="match status" value="1"/>
</dbReference>
<dbReference type="HAMAP" id="MF_01554_B">
    <property type="entry name" value="GlmM_B"/>
    <property type="match status" value="1"/>
</dbReference>
<dbReference type="InterPro" id="IPR005844">
    <property type="entry name" value="A-D-PHexomutase_a/b/a-I"/>
</dbReference>
<dbReference type="InterPro" id="IPR016055">
    <property type="entry name" value="A-D-PHexomutase_a/b/a-I/II/III"/>
</dbReference>
<dbReference type="InterPro" id="IPR005845">
    <property type="entry name" value="A-D-PHexomutase_a/b/a-II"/>
</dbReference>
<dbReference type="InterPro" id="IPR005846">
    <property type="entry name" value="A-D-PHexomutase_a/b/a-III"/>
</dbReference>
<dbReference type="InterPro" id="IPR005843">
    <property type="entry name" value="A-D-PHexomutase_C"/>
</dbReference>
<dbReference type="InterPro" id="IPR036900">
    <property type="entry name" value="A-D-PHexomutase_C_sf"/>
</dbReference>
<dbReference type="InterPro" id="IPR016066">
    <property type="entry name" value="A-D-PHexomutase_CS"/>
</dbReference>
<dbReference type="InterPro" id="IPR005841">
    <property type="entry name" value="Alpha-D-phosphohexomutase_SF"/>
</dbReference>
<dbReference type="InterPro" id="IPR006352">
    <property type="entry name" value="GlmM_bact"/>
</dbReference>
<dbReference type="InterPro" id="IPR050060">
    <property type="entry name" value="Phosphoglucosamine_mutase"/>
</dbReference>
<dbReference type="NCBIfam" id="TIGR01455">
    <property type="entry name" value="glmM"/>
    <property type="match status" value="1"/>
</dbReference>
<dbReference type="NCBIfam" id="NF008139">
    <property type="entry name" value="PRK10887.1"/>
    <property type="match status" value="1"/>
</dbReference>
<dbReference type="PANTHER" id="PTHR42946:SF1">
    <property type="entry name" value="PHOSPHOGLUCOMUTASE (ALPHA-D-GLUCOSE-1,6-BISPHOSPHATE-DEPENDENT)"/>
    <property type="match status" value="1"/>
</dbReference>
<dbReference type="PANTHER" id="PTHR42946">
    <property type="entry name" value="PHOSPHOHEXOSE MUTASE"/>
    <property type="match status" value="1"/>
</dbReference>
<dbReference type="Pfam" id="PF02878">
    <property type="entry name" value="PGM_PMM_I"/>
    <property type="match status" value="1"/>
</dbReference>
<dbReference type="Pfam" id="PF02879">
    <property type="entry name" value="PGM_PMM_II"/>
    <property type="match status" value="1"/>
</dbReference>
<dbReference type="Pfam" id="PF02880">
    <property type="entry name" value="PGM_PMM_III"/>
    <property type="match status" value="1"/>
</dbReference>
<dbReference type="Pfam" id="PF00408">
    <property type="entry name" value="PGM_PMM_IV"/>
    <property type="match status" value="1"/>
</dbReference>
<dbReference type="PRINTS" id="PR00509">
    <property type="entry name" value="PGMPMM"/>
</dbReference>
<dbReference type="SUPFAM" id="SSF55957">
    <property type="entry name" value="Phosphoglucomutase, C-terminal domain"/>
    <property type="match status" value="1"/>
</dbReference>
<dbReference type="SUPFAM" id="SSF53738">
    <property type="entry name" value="Phosphoglucomutase, first 3 domains"/>
    <property type="match status" value="3"/>
</dbReference>
<dbReference type="PROSITE" id="PS00710">
    <property type="entry name" value="PGM_PMM"/>
    <property type="match status" value="1"/>
</dbReference>
<protein>
    <recommendedName>
        <fullName>Phosphoglucosamine mutase</fullName>
        <ecNumber>5.4.2.10</ecNumber>
    </recommendedName>
</protein>
<feature type="chain" id="PRO_0000147959" description="Phosphoglucosamine mutase">
    <location>
        <begin position="1"/>
        <end position="451"/>
    </location>
</feature>
<feature type="active site" description="Phosphoserine intermediate" evidence="1">
    <location>
        <position position="102"/>
    </location>
</feature>
<feature type="binding site" description="via phosphate group" evidence="1">
    <location>
        <position position="102"/>
    </location>
    <ligand>
        <name>Mg(2+)</name>
        <dbReference type="ChEBI" id="CHEBI:18420"/>
    </ligand>
</feature>
<feature type="binding site" evidence="1">
    <location>
        <position position="242"/>
    </location>
    <ligand>
        <name>Mg(2+)</name>
        <dbReference type="ChEBI" id="CHEBI:18420"/>
    </ligand>
</feature>
<feature type="binding site" evidence="1">
    <location>
        <position position="244"/>
    </location>
    <ligand>
        <name>Mg(2+)</name>
        <dbReference type="ChEBI" id="CHEBI:18420"/>
    </ligand>
</feature>
<feature type="binding site" evidence="1">
    <location>
        <position position="246"/>
    </location>
    <ligand>
        <name>Mg(2+)</name>
        <dbReference type="ChEBI" id="CHEBI:18420"/>
    </ligand>
</feature>
<feature type="modified residue" description="Phosphoserine; by autocatalysis" evidence="6">
    <location>
        <position position="102"/>
    </location>
</feature>
<reference key="1">
    <citation type="journal article" date="1996" name="Microb. Drug Resist.">
        <title>A phosphoglucomutase-like gene essential for the optimal expression of methicillin resistance in Staphylococcus aureus: molecular cloning and DNA sequencing.</title>
        <authorList>
            <person name="Wu S."/>
            <person name="de Lencastre H."/>
            <person name="Sali A."/>
            <person name="Tomasz A."/>
        </authorList>
    </citation>
    <scope>NUCLEOTIDE SEQUENCE [GENOMIC DNA]</scope>
    <scope>DISRUPTION PHENOTYPE</scope>
    <source>
        <strain>COL</strain>
    </source>
</reference>
<reference key="2">
    <citation type="journal article" date="2005" name="J. Bacteriol.">
        <title>Insights on evolution of virulence and resistance from the complete genome analysis of an early methicillin-resistant Staphylococcus aureus strain and a biofilm-producing methicillin-resistant Staphylococcus epidermidis strain.</title>
        <authorList>
            <person name="Gill S.R."/>
            <person name="Fouts D.E."/>
            <person name="Archer G.L."/>
            <person name="Mongodin E.F."/>
            <person name="DeBoy R.T."/>
            <person name="Ravel J."/>
            <person name="Paulsen I.T."/>
            <person name="Kolonay J.F."/>
            <person name="Brinkac L.M."/>
            <person name="Beanan M.J."/>
            <person name="Dodson R.J."/>
            <person name="Daugherty S.C."/>
            <person name="Madupu R."/>
            <person name="Angiuoli S.V."/>
            <person name="Durkin A.S."/>
            <person name="Haft D.H."/>
            <person name="Vamathevan J.J."/>
            <person name="Khouri H."/>
            <person name="Utterback T.R."/>
            <person name="Lee C."/>
            <person name="Dimitrov G."/>
            <person name="Jiang L."/>
            <person name="Qin H."/>
            <person name="Weidman J."/>
            <person name="Tran K."/>
            <person name="Kang K.H."/>
            <person name="Hance I.R."/>
            <person name="Nelson K.E."/>
            <person name="Fraser C.M."/>
        </authorList>
    </citation>
    <scope>NUCLEOTIDE SEQUENCE [LARGE SCALE GENOMIC DNA]</scope>
    <source>
        <strain>COL</strain>
    </source>
</reference>
<reference key="3">
    <citation type="journal article" date="1997" name="J. Bacteriol.">
        <title>The femR315 gene from Staphylococcus aureus, the interruption of which results in reduced methicillin resistance, encodes a phosphoglucosamine mutase.</title>
        <authorList>
            <person name="Jolly L."/>
            <person name="Wu S.W."/>
            <person name="Van Heijenoort J."/>
            <person name="de Lencastre H."/>
            <person name="Mengin-Lecreulx D."/>
            <person name="Tomasz A."/>
        </authorList>
    </citation>
    <scope>FUNCTION</scope>
    <scope>CATALYTIC ACTIVITY</scope>
</reference>
<reference key="4">
    <citation type="journal article" date="2000" name="J. Bacteriol.">
        <title>Autophosphorylation of phosphoglucosamine mutase from Escherichia coli.</title>
        <authorList>
            <person name="Jolly L."/>
            <person name="Pompeo F."/>
            <person name="van Heijenoort J."/>
            <person name="Fassy F."/>
            <person name="Mengin-Lecreulx D."/>
        </authorList>
    </citation>
    <scope>PHOSPHORYLATION AT SER-102</scope>
</reference>
<sequence>MGKYFGTDGVRGVANQELTPELAFKLGRYGGYVLAHNKGEKHPRVLVGRDTRVSGEMLESALIAGLISIGAEVMRLGIISTPGVAYLTRDMGAELGVMISASHNPVADNGIKFFGSDGFKLSDEQENEIEALLDQENPELPRPVGNDIVHYSDYFEGAQKYLSYLKSTVDVNFEGLKIALDGANGSTSSLAPFLFGDLEADTETIGCSPDGYNINEKCGSTHPEKLAEKVVETESDFGLAFDGDGDRIIAVDENGQIVDGDQIMFIIGQEMHKNQELNNDMIVSTVMSNLGFYKALEQEGIKSNKTKVGDRYVVEEMRRGNYNLGGEQSGHIVMMDYNTTGDGLLTGIQLASVIKMTGKSLSELAGQMKKYPQSLINVRVTDKYRVEENVDVKEVMTKVEVEMNGEGRILVRPSGTEPLVRVMVEAATDEDAERFAQQIADVVQDKMGLDK</sequence>
<proteinExistence type="evidence at protein level"/>
<accession>Q5HE43</accession>
<accession>P95685</accession>
<accession>P95710</accession>